<organism>
    <name type="scientific">Latilactobacillus sakei subsp. sakei (strain 23K)</name>
    <name type="common">Lactobacillus sakei subsp. sakei</name>
    <dbReference type="NCBI Taxonomy" id="314315"/>
    <lineage>
        <taxon>Bacteria</taxon>
        <taxon>Bacillati</taxon>
        <taxon>Bacillota</taxon>
        <taxon>Bacilli</taxon>
        <taxon>Lactobacillales</taxon>
        <taxon>Lactobacillaceae</taxon>
        <taxon>Latilactobacillus</taxon>
    </lineage>
</organism>
<dbReference type="EMBL" id="CR936503">
    <property type="protein sequence ID" value="CAI56066.1"/>
    <property type="molecule type" value="Genomic_DNA"/>
</dbReference>
<dbReference type="RefSeq" id="WP_011375444.1">
    <property type="nucleotide sequence ID" value="NC_007576.1"/>
</dbReference>
<dbReference type="SMR" id="Q38UR8"/>
<dbReference type="STRING" id="314315.LCA_1758"/>
<dbReference type="GeneID" id="57132675"/>
<dbReference type="KEGG" id="lsa:LCA_1758"/>
<dbReference type="eggNOG" id="COG0092">
    <property type="taxonomic scope" value="Bacteria"/>
</dbReference>
<dbReference type="HOGENOM" id="CLU_058591_0_2_9"/>
<dbReference type="OrthoDB" id="9806396at2"/>
<dbReference type="Proteomes" id="UP000002707">
    <property type="component" value="Chromosome"/>
</dbReference>
<dbReference type="GO" id="GO:0022627">
    <property type="term" value="C:cytosolic small ribosomal subunit"/>
    <property type="evidence" value="ECO:0007669"/>
    <property type="project" value="TreeGrafter"/>
</dbReference>
<dbReference type="GO" id="GO:0003729">
    <property type="term" value="F:mRNA binding"/>
    <property type="evidence" value="ECO:0007669"/>
    <property type="project" value="UniProtKB-UniRule"/>
</dbReference>
<dbReference type="GO" id="GO:0019843">
    <property type="term" value="F:rRNA binding"/>
    <property type="evidence" value="ECO:0007669"/>
    <property type="project" value="UniProtKB-UniRule"/>
</dbReference>
<dbReference type="GO" id="GO:0003735">
    <property type="term" value="F:structural constituent of ribosome"/>
    <property type="evidence" value="ECO:0007669"/>
    <property type="project" value="InterPro"/>
</dbReference>
<dbReference type="GO" id="GO:0006412">
    <property type="term" value="P:translation"/>
    <property type="evidence" value="ECO:0007669"/>
    <property type="project" value="UniProtKB-UniRule"/>
</dbReference>
<dbReference type="CDD" id="cd02412">
    <property type="entry name" value="KH-II_30S_S3"/>
    <property type="match status" value="1"/>
</dbReference>
<dbReference type="FunFam" id="3.30.300.20:FF:000001">
    <property type="entry name" value="30S ribosomal protein S3"/>
    <property type="match status" value="1"/>
</dbReference>
<dbReference type="Gene3D" id="3.30.300.20">
    <property type="match status" value="1"/>
</dbReference>
<dbReference type="Gene3D" id="3.30.1140.32">
    <property type="entry name" value="Ribosomal protein S3, C-terminal domain"/>
    <property type="match status" value="1"/>
</dbReference>
<dbReference type="HAMAP" id="MF_01309_B">
    <property type="entry name" value="Ribosomal_uS3_B"/>
    <property type="match status" value="1"/>
</dbReference>
<dbReference type="InterPro" id="IPR004087">
    <property type="entry name" value="KH_dom"/>
</dbReference>
<dbReference type="InterPro" id="IPR015946">
    <property type="entry name" value="KH_dom-like_a/b"/>
</dbReference>
<dbReference type="InterPro" id="IPR004044">
    <property type="entry name" value="KH_dom_type_2"/>
</dbReference>
<dbReference type="InterPro" id="IPR009019">
    <property type="entry name" value="KH_sf_prok-type"/>
</dbReference>
<dbReference type="InterPro" id="IPR036419">
    <property type="entry name" value="Ribosomal_S3_C_sf"/>
</dbReference>
<dbReference type="InterPro" id="IPR005704">
    <property type="entry name" value="Ribosomal_uS3_bac-typ"/>
</dbReference>
<dbReference type="InterPro" id="IPR001351">
    <property type="entry name" value="Ribosomal_uS3_C"/>
</dbReference>
<dbReference type="InterPro" id="IPR018280">
    <property type="entry name" value="Ribosomal_uS3_CS"/>
</dbReference>
<dbReference type="NCBIfam" id="TIGR01009">
    <property type="entry name" value="rpsC_bact"/>
    <property type="match status" value="1"/>
</dbReference>
<dbReference type="PANTHER" id="PTHR11760">
    <property type="entry name" value="30S/40S RIBOSOMAL PROTEIN S3"/>
    <property type="match status" value="1"/>
</dbReference>
<dbReference type="PANTHER" id="PTHR11760:SF19">
    <property type="entry name" value="SMALL RIBOSOMAL SUBUNIT PROTEIN US3C"/>
    <property type="match status" value="1"/>
</dbReference>
<dbReference type="Pfam" id="PF07650">
    <property type="entry name" value="KH_2"/>
    <property type="match status" value="1"/>
</dbReference>
<dbReference type="Pfam" id="PF00189">
    <property type="entry name" value="Ribosomal_S3_C"/>
    <property type="match status" value="1"/>
</dbReference>
<dbReference type="SMART" id="SM00322">
    <property type="entry name" value="KH"/>
    <property type="match status" value="1"/>
</dbReference>
<dbReference type="SUPFAM" id="SSF54814">
    <property type="entry name" value="Prokaryotic type KH domain (KH-domain type II)"/>
    <property type="match status" value="1"/>
</dbReference>
<dbReference type="SUPFAM" id="SSF54821">
    <property type="entry name" value="Ribosomal protein S3 C-terminal domain"/>
    <property type="match status" value="1"/>
</dbReference>
<dbReference type="PROSITE" id="PS50823">
    <property type="entry name" value="KH_TYPE_2"/>
    <property type="match status" value="1"/>
</dbReference>
<dbReference type="PROSITE" id="PS00548">
    <property type="entry name" value="RIBOSOMAL_S3"/>
    <property type="match status" value="1"/>
</dbReference>
<proteinExistence type="inferred from homology"/>
<keyword id="KW-1185">Reference proteome</keyword>
<keyword id="KW-0687">Ribonucleoprotein</keyword>
<keyword id="KW-0689">Ribosomal protein</keyword>
<keyword id="KW-0694">RNA-binding</keyword>
<keyword id="KW-0699">rRNA-binding</keyword>
<reference key="1">
    <citation type="journal article" date="2005" name="Nat. Biotechnol.">
        <title>The complete genome sequence of the meat-borne lactic acid bacterium Lactobacillus sakei 23K.</title>
        <authorList>
            <person name="Chaillou S."/>
            <person name="Champomier-Verges M.-C."/>
            <person name="Cornet M."/>
            <person name="Crutz-Le Coq A.-M."/>
            <person name="Dudez A.-M."/>
            <person name="Martin V."/>
            <person name="Beaufils S."/>
            <person name="Darbon-Rongere E."/>
            <person name="Bossy R."/>
            <person name="Loux V."/>
            <person name="Zagorec M."/>
        </authorList>
    </citation>
    <scope>NUCLEOTIDE SEQUENCE [LARGE SCALE GENOMIC DNA]</scope>
    <source>
        <strain>23K</strain>
    </source>
</reference>
<name>RS3_LATSS</name>
<sequence length="219" mass="24331">MGQKINPTGFRVGVIRDWDAKWYAEKDFATFLHEDLKIRKYINTKLADASVSTIEIERAANRVNVSIHTAKPGMVIGKGGSEVENLRKALNNLTGKKVHINIVEIKKPDLDAHLVGEGIARQLEARVAFRRAQRQAMQRTMRAGAKGIKTQVAGRLNGADMSRIETHAQGTVPLHTLRADIDYSWDEAMTTYGKLGVKTWIYRGEVLPAKANNNTKGGK</sequence>
<evidence type="ECO:0000255" key="1">
    <source>
        <dbReference type="HAMAP-Rule" id="MF_01309"/>
    </source>
</evidence>
<evidence type="ECO:0000305" key="2"/>
<feature type="chain" id="PRO_0000230703" description="Small ribosomal subunit protein uS3">
    <location>
        <begin position="1"/>
        <end position="219"/>
    </location>
</feature>
<feature type="domain" description="KH type-2" evidence="1">
    <location>
        <begin position="38"/>
        <end position="106"/>
    </location>
</feature>
<comment type="function">
    <text evidence="1">Binds the lower part of the 30S subunit head. Binds mRNA in the 70S ribosome, positioning it for translation.</text>
</comment>
<comment type="subunit">
    <text evidence="1">Part of the 30S ribosomal subunit. Forms a tight complex with proteins S10 and S14.</text>
</comment>
<comment type="similarity">
    <text evidence="1">Belongs to the universal ribosomal protein uS3 family.</text>
</comment>
<protein>
    <recommendedName>
        <fullName evidence="1">Small ribosomal subunit protein uS3</fullName>
    </recommendedName>
    <alternativeName>
        <fullName evidence="2">30S ribosomal protein S3</fullName>
    </alternativeName>
</protein>
<accession>Q38UR8</accession>
<gene>
    <name evidence="1" type="primary">rpsC</name>
    <name type="ordered locus">LCA_1758</name>
</gene>